<accession>B8MKZ4</accession>
<feature type="chain" id="PRO_0000458945" description="Alkylcitrate dehydratase phiI">
    <location>
        <begin position="1"/>
        <end position="474"/>
    </location>
</feature>
<name>TSTI_TALSN</name>
<organism>
    <name type="scientific">Talaromyces stipitatus (strain ATCC 10500 / CBS 375.48 / QM 6759 / NRRL 1006)</name>
    <name type="common">Penicillium stipitatum</name>
    <dbReference type="NCBI Taxonomy" id="441959"/>
    <lineage>
        <taxon>Eukaryota</taxon>
        <taxon>Fungi</taxon>
        <taxon>Dikarya</taxon>
        <taxon>Ascomycota</taxon>
        <taxon>Pezizomycotina</taxon>
        <taxon>Eurotiomycetes</taxon>
        <taxon>Eurotiomycetidae</taxon>
        <taxon>Eurotiales</taxon>
        <taxon>Trichocomaceae</taxon>
        <taxon>Talaromyces</taxon>
        <taxon>Talaromyces sect. Talaromyces</taxon>
    </lineage>
</organism>
<proteinExistence type="evidence at protein level"/>
<keyword id="KW-0456">Lyase</keyword>
<keyword id="KW-1185">Reference proteome</keyword>
<dbReference type="EC" id="4.2.1.-" evidence="2"/>
<dbReference type="EMBL" id="EQ962657">
    <property type="protein sequence ID" value="EED15410.1"/>
    <property type="molecule type" value="Genomic_DNA"/>
</dbReference>
<dbReference type="RefSeq" id="XP_002485363.1">
    <property type="nucleotide sequence ID" value="XM_002485318.1"/>
</dbReference>
<dbReference type="SMR" id="B8MKZ4"/>
<dbReference type="STRING" id="441959.B8MKZ4"/>
<dbReference type="GeneID" id="8107032"/>
<dbReference type="VEuPathDB" id="FungiDB:TSTA_048500"/>
<dbReference type="HOGENOM" id="CLU_021803_1_0_1"/>
<dbReference type="InParanoid" id="B8MKZ4"/>
<dbReference type="OMA" id="MSCPYDQ"/>
<dbReference type="OrthoDB" id="10055203at2759"/>
<dbReference type="PhylomeDB" id="B8MKZ4"/>
<dbReference type="Proteomes" id="UP000001745">
    <property type="component" value="Unassembled WGS sequence"/>
</dbReference>
<dbReference type="GO" id="GO:0005739">
    <property type="term" value="C:mitochondrion"/>
    <property type="evidence" value="ECO:0007669"/>
    <property type="project" value="TreeGrafter"/>
</dbReference>
<dbReference type="GO" id="GO:0047547">
    <property type="term" value="F:2-methylcitrate dehydratase activity"/>
    <property type="evidence" value="ECO:0007669"/>
    <property type="project" value="UniProtKB-EC"/>
</dbReference>
<dbReference type="Gene3D" id="1.10.4100.10">
    <property type="entry name" value="2-methylcitrate dehydratase PrpD"/>
    <property type="match status" value="1"/>
</dbReference>
<dbReference type="InterPro" id="IPR036148">
    <property type="entry name" value="MmgE/PrpD_sf"/>
</dbReference>
<dbReference type="InterPro" id="IPR042183">
    <property type="entry name" value="MmgE/PrpD_sf_1"/>
</dbReference>
<dbReference type="InterPro" id="IPR005656">
    <property type="entry name" value="MmgE_PrpD"/>
</dbReference>
<dbReference type="InterPro" id="IPR045337">
    <property type="entry name" value="MmgE_PrpD_C"/>
</dbReference>
<dbReference type="InterPro" id="IPR045336">
    <property type="entry name" value="MmgE_PrpD_N"/>
</dbReference>
<dbReference type="PANTHER" id="PTHR16943">
    <property type="entry name" value="2-METHYLCITRATE DEHYDRATASE-RELATED"/>
    <property type="match status" value="1"/>
</dbReference>
<dbReference type="PANTHER" id="PTHR16943:SF15">
    <property type="entry name" value="DEHYDRATASE (PRPD), PUTATIVE-RELATED"/>
    <property type="match status" value="1"/>
</dbReference>
<dbReference type="Pfam" id="PF19305">
    <property type="entry name" value="MmgE_PrpD_C"/>
    <property type="match status" value="1"/>
</dbReference>
<dbReference type="Pfam" id="PF03972">
    <property type="entry name" value="MmgE_PrpD_N"/>
    <property type="match status" value="1"/>
</dbReference>
<dbReference type="SUPFAM" id="SSF103378">
    <property type="entry name" value="2-methylcitrate dehydratase PrpD"/>
    <property type="match status" value="1"/>
</dbReference>
<comment type="function">
    <text evidence="2 3">Alkylcitrate dehydratasee; part of the gene cluster that mediates the biosynthesis of the antihypercholesterolemic agents phomoidrides which are dimeric anhydrides (PubMed:26558485, PubMed:36374185). Within the pathway, the alkylcitrate synthase (ACS) tstiJ and the alkylcitrate dehydratase (ACDH) tstI produce the decarboxylated monomeric anhydrides by coupling the C12-fatty acyl product from phiA with oxalacetic acid (PubMed:26558485, PubMed:36374185). The pathway begins with the highly reducing polyketide synthase tstA that catalyzes the formation of a C12-fatty acyl-ACP, starting from one acetate and 5 malonate units. The hydrolase tstM is involved in the release of the C12-fatty acyl chain from phiA. The alkylcitrate synthase (ACS) tstJ and the alkylcitrate dehydratase (ACDH) tstI then give rise to decarboxylated monomeric anhydrides by coupling the C12-fatty acyl chain with oxalacetic acid. The cyclase tstC is responsible for the dimerization of the monomeric anhydrides which leads to the production of prephomoidride that contains the characteristic bicyclo[4.3.1]deca-1,6-diene system of phomoidrides. Iterative oxidation catalyzed by the alpha-ketoglutarate-dependent dioxygenase tstK produced then phomoidride A. Finally, the methyltransferase tstE converts phomoidride A to phomoidride B via an acetalization reaction. The phosphatidylethanolamine-binding protein tstB and tstN are not essential for dimerization and their functions have still to be determined (PubMed:36374185).</text>
</comment>
<comment type="catalytic activity">
    <reaction evidence="2">
        <text>(4E,11E)-2-hydroxytrideca-4,11-dien-1,2,3-tricarboxylate + 2 H(+) = [4-(deca-1,8-diyl)-2,5-dioxo-2,5-dihydro-3-furanyl]acetate + 2 H2O</text>
        <dbReference type="Rhea" id="RHEA:77755"/>
        <dbReference type="ChEBI" id="CHEBI:15377"/>
        <dbReference type="ChEBI" id="CHEBI:15378"/>
        <dbReference type="ChEBI" id="CHEBI:197420"/>
        <dbReference type="ChEBI" id="CHEBI:197445"/>
    </reaction>
    <physiologicalReaction direction="left-to-right" evidence="2">
        <dbReference type="Rhea" id="RHEA:77756"/>
    </physiologicalReaction>
</comment>
<comment type="pathway">
    <text evidence="2 3">Secondary metabolite biosynthesis.</text>
</comment>
<comment type="subunit">
    <text evidence="1">Monomer.</text>
</comment>
<comment type="biotechnology">
    <text evidence="4">Phomoidrides A and B (also known as CP-225,917 and CP-263,114) are potent inhibitors of Ras farnesyltransferase and squalene synthase (PubMed:9066758). CP-225,917 and CP-263,114 inhibit Ras farnesyl transferase from rat brain with IC(50) values of 6 uM and 20 uoM, respectively (PubMed:9066758). CP-225,917 inhibits squalene synthase with an IC(50) value of 43 uM and CP-263,114 with an IC(50) of 160 uM (PubMed:9066758).</text>
</comment>
<comment type="similarity">
    <text evidence="6">Belongs to the PrpD family.</text>
</comment>
<sequence>MTDEIPFDKPIRDIASYVHNYTIPSSPTSFKHARGVILDSLGCAIETLHRSSEACTLLGPVIPGTTFPYGFHLPGTSYVLDPVKGTFDLGVLIRYLDHNDAFGGAEWGHPSDTLSAIIAVMDWLCRAEQRSSTTSIRYPPLTIKTLLEAAIKAYEIQGCYQLQNAFNAYGIDHVILVKLAAASVCSWLMGMTETQTISGANTTSRKGWAAADAAMRAVHLCLLTHAGQLGSKQPLNDKRYGFLVHTFGLEAGFALPRAFGDWAIQNIFTKLMPCEGHGISAVEAALVQGRKLKSCGHTVSDIKHIDLRVTAAANLIISKIGRLYNAADRDHCIQYVIALAFLKGRFPDAEDYMDDSPYANSKEMDDLREKIMMKVDQDLTQGYLDPERKSCGTGMTVYLNNGTVLDEVLVEYPAGHLKNPRTKELHQRKFEKNMRLAFTDAEIANIVKCIEDDEMPISSFVDLFTRDSKGMAKL</sequence>
<evidence type="ECO:0000250" key="1">
    <source>
        <dbReference type="UniProtKB" id="Q6C354"/>
    </source>
</evidence>
<evidence type="ECO:0000269" key="2">
    <source>
    </source>
</evidence>
<evidence type="ECO:0000269" key="3">
    <source>
    </source>
</evidence>
<evidence type="ECO:0000269" key="4">
    <source>
    </source>
</evidence>
<evidence type="ECO:0000303" key="5">
    <source>
    </source>
</evidence>
<evidence type="ECO:0000305" key="6"/>
<reference key="1">
    <citation type="journal article" date="2015" name="Genome Announc.">
        <title>Genome sequence of the AIDS-associated pathogen Penicillium marneffei (ATCC18224) and its near taxonomic relative Talaromyces stipitatus (ATCC10500).</title>
        <authorList>
            <person name="Nierman W.C."/>
            <person name="Fedorova-Abrams N.D."/>
            <person name="Andrianopoulos A."/>
        </authorList>
    </citation>
    <scope>NUCLEOTIDE SEQUENCE [LARGE SCALE GENOMIC DNA]</scope>
    <source>
        <strain>ATCC 10500 / CBS 375.48 / QM 6759 / NRRL 1006</strain>
    </source>
</reference>
<reference key="2">
    <citation type="journal article" date="1997" name="J. Antibiot.">
        <title>CP-225,917 and CP-263,114, novel Ras farnesylation inhibitors from an unidentified fungus. I. Taxonomy, fermentation, isolation, and biochemical properties.</title>
        <authorList>
            <person name="Dabrah T.T."/>
            <person name="Harwood H.J. Jr."/>
            <person name="Huang L.H."/>
            <person name="Jankovich N.D."/>
            <person name="Kaneko T."/>
            <person name="Li J.C."/>
            <person name="Lindsey S."/>
            <person name="Moshier P.M."/>
            <person name="Subashi T.A."/>
            <person name="Therrien M."/>
            <person name="Watts P.C."/>
        </authorList>
    </citation>
    <scope>BIOTECHNOLOGY</scope>
</reference>
<reference key="3">
    <citation type="journal article" date="2015" name="Org. Lett.">
        <title>Biosynthetic study on antihypercholesterolemic agent phomoidride: general biogenesis of fungal dimeric anhydrides.</title>
        <authorList>
            <person name="Fujii R."/>
            <person name="Matsu Y."/>
            <person name="Minami A."/>
            <person name="Nagamine S."/>
            <person name="Takeuchi I."/>
            <person name="Gomi K."/>
            <person name="Oikawa H."/>
        </authorList>
    </citation>
    <scope>FUNCTION</scope>
    <scope>CATALYTIC ACTIVITY</scope>
    <scope>PATHWAY</scope>
</reference>
<reference key="4">
    <citation type="journal article" date="2022" name="J. Am. Chem. Soc.">
        <title>Elucidation of late-stage biosynthesis of phomoidride: proposal of cyclization mechanism affording characteristic nine-membered ring of fungal dimeric anhydride.</title>
        <authorList>
            <person name="Yamamoto S."/>
            <person name="Matsuyama T."/>
            <person name="Ozaki T."/>
            <person name="Takino J."/>
            <person name="Sato H."/>
            <person name="Uchiyama M."/>
            <person name="Minami A."/>
            <person name="Oikawa H."/>
        </authorList>
    </citation>
    <scope>FUNCTION</scope>
    <scope>CATALYTIC ACTIVITY</scope>
    <scope>PATHWAY</scope>
</reference>
<protein>
    <recommendedName>
        <fullName evidence="5">Alkylcitrate dehydratase phiI</fullName>
        <shortName evidence="5">ACDH</shortName>
        <ecNumber evidence="2">4.2.1.-</ecNumber>
    </recommendedName>
    <alternativeName>
        <fullName evidence="5">Phomoidride biosynthesis cluster protein I</fullName>
    </alternativeName>
</protein>
<gene>
    <name evidence="5" type="primary">tstI</name>
    <name type="ORF">TSTA_048500</name>
</gene>